<geneLocation type="plasmid">
    <name>pLeu</name>
    <name>pBAp1</name>
</geneLocation>
<sequence length="444" mass="49621">MISKTLYQKIYDSHIVYQDKNGGAILYIDLHLLHEVTSPQAFDALRSKKREVRQSKKTFATMDHNVSTTIQNISASGSMARKQMEQLIKNCQEFNIPLYDINNPNQGIVHVIAPEKGMTLPGMTIVCGDSHTSTHGAFGALAFGIGTSEVEHVLATQTLKQKRFKNMKIEIIGKIPKFVTAKDIILFVIGQLGSSSGTGYVIEFCGNIIKNMSMEERMTVCNMAIEMXAKSGLIAPXXITYKYLKDKIYSPSGLFWEKSLDYWKCLKSDKNAYFDKCITVDISNLAPQITWGTNPDQVISIDEKIPDYNNINSEVKKDSAKSACKYMGLKSNTYLTNISIDKVFIGSXTNARIEDLRSAAKILQNRKIAKHVKAIVVPGSGLVKKKAEQEGLDKIFIDSGFEWRLPGCSMXLGMNKDRLNFGERXXSHSNRNFEGRQGRGGRTH</sequence>
<gene>
    <name evidence="1" type="primary">leuC</name>
</gene>
<organism>
    <name type="scientific">Buchnera aphidicola subsp. Uroleucon rudbeckiae</name>
    <dbReference type="NCBI Taxonomy" id="118114"/>
    <lineage>
        <taxon>Bacteria</taxon>
        <taxon>Pseudomonadati</taxon>
        <taxon>Pseudomonadota</taxon>
        <taxon>Gammaproteobacteria</taxon>
        <taxon>Enterobacterales</taxon>
        <taxon>Erwiniaceae</taxon>
        <taxon>Buchnera</taxon>
    </lineage>
</organism>
<proteinExistence type="inferred from homology"/>
<evidence type="ECO:0000255" key="1">
    <source>
        <dbReference type="HAMAP-Rule" id="MF_01026"/>
    </source>
</evidence>
<evidence type="ECO:0000256" key="2">
    <source>
        <dbReference type="SAM" id="MobiDB-lite"/>
    </source>
</evidence>
<protein>
    <recommendedName>
        <fullName evidence="1">3-isopropylmalate dehydratase large subunit</fullName>
        <ecNumber evidence="1">4.2.1.33</ecNumber>
    </recommendedName>
    <alternativeName>
        <fullName evidence="1">Alpha-IPM isomerase</fullName>
        <shortName evidence="1">IPMI</shortName>
    </alternativeName>
    <alternativeName>
        <fullName evidence="1">Isopropylmalate isomerase</fullName>
    </alternativeName>
</protein>
<reference key="1">
    <citation type="journal article" date="2001" name="J. Bacteriol.">
        <title>Vertical transmission of biosynthetic plasmids in aphid endosymbionts (Buchnera).</title>
        <authorList>
            <person name="Wernegreen J.J."/>
            <person name="Moran N.A."/>
        </authorList>
    </citation>
    <scope>NUCLEOTIDE SEQUENCE [GENOMIC DNA]</scope>
</reference>
<comment type="function">
    <text evidence="1">Catalyzes the isomerization between 2-isopropylmalate and 3-isopropylmalate, via the formation of 2-isopropylmaleate.</text>
</comment>
<comment type="catalytic activity">
    <reaction evidence="1">
        <text>(2R,3S)-3-isopropylmalate = (2S)-2-isopropylmalate</text>
        <dbReference type="Rhea" id="RHEA:32287"/>
        <dbReference type="ChEBI" id="CHEBI:1178"/>
        <dbReference type="ChEBI" id="CHEBI:35121"/>
        <dbReference type="EC" id="4.2.1.33"/>
    </reaction>
</comment>
<comment type="cofactor">
    <cofactor evidence="1">
        <name>[4Fe-4S] cluster</name>
        <dbReference type="ChEBI" id="CHEBI:49883"/>
    </cofactor>
    <text evidence="1">Binds 1 [4Fe-4S] cluster per subunit.</text>
</comment>
<comment type="pathway">
    <text evidence="1">Amino-acid biosynthesis; L-leucine biosynthesis; L-leucine from 3-methyl-2-oxobutanoate: step 2/4.</text>
</comment>
<comment type="subunit">
    <text evidence="1">Heterodimer of LeuC and LeuD.</text>
</comment>
<comment type="similarity">
    <text evidence="1">Belongs to the aconitase/IPM isomerase family. LeuC type 1 subfamily.</text>
</comment>
<keyword id="KW-0004">4Fe-4S</keyword>
<keyword id="KW-0028">Amino-acid biosynthesis</keyword>
<keyword id="KW-0100">Branched-chain amino acid biosynthesis</keyword>
<keyword id="KW-0408">Iron</keyword>
<keyword id="KW-0411">Iron-sulfur</keyword>
<keyword id="KW-0432">Leucine biosynthesis</keyword>
<keyword id="KW-0456">Lyase</keyword>
<keyword id="KW-0479">Metal-binding</keyword>
<keyword id="KW-0614">Plasmid</keyword>
<feature type="chain" id="PRO_0000076728" description="3-isopropylmalate dehydratase large subunit">
    <location>
        <begin position="1"/>
        <end position="444" status="greater than"/>
    </location>
</feature>
<feature type="region of interest" description="Disordered" evidence="2">
    <location>
        <begin position="423"/>
        <end position="444"/>
    </location>
</feature>
<feature type="binding site" evidence="1">
    <location>
        <position position="348"/>
    </location>
    <ligand>
        <name>[4Fe-4S] cluster</name>
        <dbReference type="ChEBI" id="CHEBI:49883"/>
    </ligand>
</feature>
<feature type="binding site" evidence="1">
    <location>
        <position position="408"/>
    </location>
    <ligand>
        <name>[4Fe-4S] cluster</name>
        <dbReference type="ChEBI" id="CHEBI:49883"/>
    </ligand>
</feature>
<feature type="binding site" evidence="1">
    <location>
        <position position="411"/>
    </location>
    <ligand>
        <name>[4Fe-4S] cluster</name>
        <dbReference type="ChEBI" id="CHEBI:49883"/>
    </ligand>
</feature>
<feature type="non-terminal residue">
    <location>
        <position position="444"/>
    </location>
</feature>
<accession>Q9EVE0</accession>
<dbReference type="EC" id="4.2.1.33" evidence="1"/>
<dbReference type="EMBL" id="AF200469">
    <property type="protein sequence ID" value="AAG31929.1"/>
    <property type="molecule type" value="Genomic_DNA"/>
</dbReference>
<dbReference type="UniPathway" id="UPA00048">
    <property type="reaction ID" value="UER00071"/>
</dbReference>
<dbReference type="GO" id="GO:0003861">
    <property type="term" value="F:3-isopropylmalate dehydratase activity"/>
    <property type="evidence" value="ECO:0007669"/>
    <property type="project" value="UniProtKB-EC"/>
</dbReference>
<dbReference type="GO" id="GO:0051539">
    <property type="term" value="F:4 iron, 4 sulfur cluster binding"/>
    <property type="evidence" value="ECO:0007669"/>
    <property type="project" value="UniProtKB-KW"/>
</dbReference>
<dbReference type="GO" id="GO:0046872">
    <property type="term" value="F:metal ion binding"/>
    <property type="evidence" value="ECO:0007669"/>
    <property type="project" value="UniProtKB-KW"/>
</dbReference>
<dbReference type="GO" id="GO:0009098">
    <property type="term" value="P:L-leucine biosynthetic process"/>
    <property type="evidence" value="ECO:0007669"/>
    <property type="project" value="UniProtKB-UniPathway"/>
</dbReference>
<dbReference type="CDD" id="cd01583">
    <property type="entry name" value="IPMI"/>
    <property type="match status" value="1"/>
</dbReference>
<dbReference type="Gene3D" id="3.30.499.10">
    <property type="entry name" value="Aconitase, domain 3"/>
    <property type="match status" value="2"/>
</dbReference>
<dbReference type="HAMAP" id="MF_01026">
    <property type="entry name" value="LeuC_type1"/>
    <property type="match status" value="1"/>
</dbReference>
<dbReference type="InterPro" id="IPR004430">
    <property type="entry name" value="3-IsopropMal_deHydase_lsu"/>
</dbReference>
<dbReference type="InterPro" id="IPR015931">
    <property type="entry name" value="Acnase/IPM_dHydase_lsu_aba_1/3"/>
</dbReference>
<dbReference type="InterPro" id="IPR001030">
    <property type="entry name" value="Acoase/IPM_deHydtase_lsu_aba"/>
</dbReference>
<dbReference type="InterPro" id="IPR036008">
    <property type="entry name" value="Aconitase_4Fe-4S_dom"/>
</dbReference>
<dbReference type="InterPro" id="IPR050067">
    <property type="entry name" value="IPM_dehydratase_rel_enz"/>
</dbReference>
<dbReference type="InterPro" id="IPR033941">
    <property type="entry name" value="IPMI_cat"/>
</dbReference>
<dbReference type="NCBIfam" id="TIGR00170">
    <property type="entry name" value="leuC"/>
    <property type="match status" value="1"/>
</dbReference>
<dbReference type="NCBIfam" id="NF004016">
    <property type="entry name" value="PRK05478.1"/>
    <property type="match status" value="1"/>
</dbReference>
<dbReference type="NCBIfam" id="NF009116">
    <property type="entry name" value="PRK12466.1"/>
    <property type="match status" value="1"/>
</dbReference>
<dbReference type="PANTHER" id="PTHR43822:SF9">
    <property type="entry name" value="3-ISOPROPYLMALATE DEHYDRATASE"/>
    <property type="match status" value="1"/>
</dbReference>
<dbReference type="PANTHER" id="PTHR43822">
    <property type="entry name" value="HOMOACONITASE, MITOCHONDRIAL-RELATED"/>
    <property type="match status" value="1"/>
</dbReference>
<dbReference type="Pfam" id="PF00330">
    <property type="entry name" value="Aconitase"/>
    <property type="match status" value="1"/>
</dbReference>
<dbReference type="PRINTS" id="PR00415">
    <property type="entry name" value="ACONITASE"/>
</dbReference>
<dbReference type="SUPFAM" id="SSF53732">
    <property type="entry name" value="Aconitase iron-sulfur domain"/>
    <property type="match status" value="1"/>
</dbReference>
<dbReference type="PROSITE" id="PS00450">
    <property type="entry name" value="ACONITASE_1"/>
    <property type="match status" value="1"/>
</dbReference>
<dbReference type="PROSITE" id="PS01244">
    <property type="entry name" value="ACONITASE_2"/>
    <property type="match status" value="1"/>
</dbReference>
<name>LEUC_BUCUD</name>